<organism>
    <name type="scientific">Gorilla gorilla gorilla</name>
    <name type="common">Western lowland gorilla</name>
    <dbReference type="NCBI Taxonomy" id="9595"/>
    <lineage>
        <taxon>Eukaryota</taxon>
        <taxon>Metazoa</taxon>
        <taxon>Chordata</taxon>
        <taxon>Craniata</taxon>
        <taxon>Vertebrata</taxon>
        <taxon>Euteleostomi</taxon>
        <taxon>Mammalia</taxon>
        <taxon>Eutheria</taxon>
        <taxon>Euarchontoglires</taxon>
        <taxon>Primates</taxon>
        <taxon>Haplorrhini</taxon>
        <taxon>Catarrhini</taxon>
        <taxon>Hominidae</taxon>
        <taxon>Gorilla</taxon>
    </lineage>
</organism>
<gene>
    <name type="primary">DEFB106A</name>
    <name type="synonym">DEFB106</name>
</gene>
<reference key="1">
    <citation type="submission" date="2006-11" db="EMBL/GenBank/DDBJ databases">
        <title>Evolution and sequence variation of human beta-defensin genes.</title>
        <authorList>
            <person name="Hollox E.J."/>
            <person name="Armour J.A.L."/>
        </authorList>
    </citation>
    <scope>NUCLEOTIDE SEQUENCE [GENOMIC DNA]</scope>
</reference>
<evidence type="ECO:0000250" key="1"/>
<evidence type="ECO:0000250" key="2">
    <source>
        <dbReference type="UniProtKB" id="Q8N104"/>
    </source>
</evidence>
<evidence type="ECO:0000305" key="3"/>
<feature type="signal peptide" evidence="2">
    <location>
        <begin position="1"/>
        <end position="20"/>
    </location>
</feature>
<feature type="peptide" id="PRO_0000289815" description="Beta-defensin 106A">
    <location>
        <begin position="21"/>
        <end position="65"/>
    </location>
</feature>
<feature type="disulfide bond" evidence="2">
    <location>
        <begin position="26"/>
        <end position="53"/>
    </location>
</feature>
<feature type="disulfide bond" evidence="1">
    <location>
        <begin position="33"/>
        <end position="47"/>
    </location>
</feature>
<feature type="disulfide bond" evidence="1">
    <location>
        <begin position="37"/>
        <end position="54"/>
    </location>
</feature>
<name>D106A_GORGO</name>
<proteinExistence type="inferred from homology"/>
<accession>A4H211</accession>
<sequence>MRTFLFLFAVLFFLTPAKNAFFDEKCNKLKGTCKNNCGKNEELIALCQKSLKCCRTIQPCGSIID</sequence>
<comment type="function">
    <text evidence="2">Has antibacterial activity. Acts as a ligand for C-C chemokine receptor CCR2.</text>
</comment>
<comment type="subunit">
    <text evidence="2">Monomer. Interacts with CCR2 (via extracellular N-terminal region); this interaction may preferentially require specific tyrosine sulfation on CCR2.</text>
</comment>
<comment type="subcellular location">
    <subcellularLocation>
        <location evidence="2">Secreted</location>
    </subcellularLocation>
    <subcellularLocation>
        <location evidence="2">Membrane</location>
    </subcellularLocation>
    <text evidence="2">Associates with tumor cell membrane-derived microvesicles.</text>
</comment>
<comment type="similarity">
    <text evidence="3">Belongs to the beta-defensin family.</text>
</comment>
<dbReference type="EMBL" id="AM410116">
    <property type="protein sequence ID" value="CAL68931.1"/>
    <property type="molecule type" value="Genomic_DNA"/>
</dbReference>
<dbReference type="RefSeq" id="XP_004046657.1">
    <property type="nucleotide sequence ID" value="XM_004046609.2"/>
</dbReference>
<dbReference type="SMR" id="A4H211"/>
<dbReference type="FunCoup" id="A4H211">
    <property type="interactions" value="3"/>
</dbReference>
<dbReference type="STRING" id="9593.ENSGGOP00000003580"/>
<dbReference type="Ensembl" id="ENSGGOT00000003660.3">
    <property type="protein sequence ID" value="ENSGGOP00000003580.2"/>
    <property type="gene ID" value="ENSGGOG00000003644.3"/>
</dbReference>
<dbReference type="GeneID" id="101128133"/>
<dbReference type="KEGG" id="ggo:101128133"/>
<dbReference type="eggNOG" id="ENOG502TF62">
    <property type="taxonomic scope" value="Eukaryota"/>
</dbReference>
<dbReference type="GeneTree" id="ENSGT00390000005938"/>
<dbReference type="HOGENOM" id="CLU_187814_0_0_1"/>
<dbReference type="InParanoid" id="A4H211"/>
<dbReference type="OMA" id="RGTCKNN"/>
<dbReference type="Proteomes" id="UP000001519">
    <property type="component" value="Chromosome 8"/>
</dbReference>
<dbReference type="GO" id="GO:0005576">
    <property type="term" value="C:extracellular region"/>
    <property type="evidence" value="ECO:0007669"/>
    <property type="project" value="UniProtKB-SubCell"/>
</dbReference>
<dbReference type="GO" id="GO:0016020">
    <property type="term" value="C:membrane"/>
    <property type="evidence" value="ECO:0007669"/>
    <property type="project" value="UniProtKB-SubCell"/>
</dbReference>
<dbReference type="GO" id="GO:0042742">
    <property type="term" value="P:defense response to bacterium"/>
    <property type="evidence" value="ECO:0007669"/>
    <property type="project" value="UniProtKB-KW"/>
</dbReference>
<dbReference type="GO" id="GO:0045087">
    <property type="term" value="P:innate immune response"/>
    <property type="evidence" value="ECO:0007669"/>
    <property type="project" value="InterPro"/>
</dbReference>
<dbReference type="FunFam" id="3.10.360.10:FF:000002">
    <property type="entry name" value="Beta-defensin 106A"/>
    <property type="match status" value="1"/>
</dbReference>
<dbReference type="Gene3D" id="3.10.360.10">
    <property type="entry name" value="Antimicrobial Peptide, Beta-defensin 2, Chain A"/>
    <property type="match status" value="1"/>
</dbReference>
<dbReference type="InterPro" id="IPR025933">
    <property type="entry name" value="Beta_defensin_dom"/>
</dbReference>
<dbReference type="Pfam" id="PF13841">
    <property type="entry name" value="Defensin_beta_2"/>
    <property type="match status" value="1"/>
</dbReference>
<protein>
    <recommendedName>
        <fullName>Beta-defensin 106A</fullName>
    </recommendedName>
    <alternativeName>
        <fullName>Defensin, beta 106</fullName>
    </alternativeName>
    <alternativeName>
        <fullName>Defensin, beta 106A</fullName>
    </alternativeName>
</protein>
<keyword id="KW-0044">Antibiotic</keyword>
<keyword id="KW-0929">Antimicrobial</keyword>
<keyword id="KW-0211">Defensin</keyword>
<keyword id="KW-1015">Disulfide bond</keyword>
<keyword id="KW-0472">Membrane</keyword>
<keyword id="KW-1185">Reference proteome</keyword>
<keyword id="KW-0964">Secreted</keyword>
<keyword id="KW-0732">Signal</keyword>